<keyword id="KW-0002">3D-structure</keyword>
<keyword id="KW-0025">Alternative splicing</keyword>
<keyword id="KW-0378">Hydrolase</keyword>
<keyword id="KW-0456">Lyase</keyword>
<keyword id="KW-0540">Nuclease</keyword>
<keyword id="KW-0539">Nucleus</keyword>
<keyword id="KW-1267">Proteomics identification</keyword>
<keyword id="KW-1185">Reference proteome</keyword>
<sequence length="265" mass="30268">MSAAPLVGYSSSGSEDESEDGMRTRPGDGSHRRGQSPLPRQRFPVPDSVLNMFPGTEEGPEDDSTKHGGRVRTFPHERGNWATHVYVPYEAKEEFLDLLDVLLPHAQTYVPRLVRMKVFHLSLSQSVVLRHHWILPFVQALKARMTSFHRFFFTANQVKIYTNQEKTRTFIGLEVTSGHAQFLDLVSEVDRVMEEFNLTTFYQDPSFHLSLAWCVGDARLQLEGQCLQELQAIVDGFEDAEVLLRVHTEQVRCKSGNKFFSMPLK</sequence>
<evidence type="ECO:0000255" key="1">
    <source>
        <dbReference type="HAMAP-Rule" id="MF_03040"/>
    </source>
</evidence>
<evidence type="ECO:0000256" key="2">
    <source>
        <dbReference type="SAM" id="MobiDB-lite"/>
    </source>
</evidence>
<evidence type="ECO:0000269" key="3">
    <source>
    </source>
</evidence>
<evidence type="ECO:0000269" key="4">
    <source>
    </source>
</evidence>
<evidence type="ECO:0000269" key="5">
    <source>
    </source>
</evidence>
<evidence type="ECO:0000269" key="6">
    <source>
    </source>
</evidence>
<evidence type="ECO:0000269" key="7">
    <source>
    </source>
</evidence>
<evidence type="ECO:0000269" key="8">
    <source>
    </source>
</evidence>
<evidence type="ECO:0000269" key="9">
    <source>
    </source>
</evidence>
<evidence type="ECO:0000269" key="10">
    <source>
    </source>
</evidence>
<evidence type="ECO:0000269" key="11">
    <source>
    </source>
</evidence>
<evidence type="ECO:0000303" key="12">
    <source>
    </source>
</evidence>
<evidence type="ECO:0000303" key="13">
    <source>
    </source>
</evidence>
<evidence type="ECO:0000303" key="14">
    <source>
    </source>
</evidence>
<evidence type="ECO:0000305" key="15"/>
<evidence type="ECO:0000305" key="16">
    <source>
    </source>
</evidence>
<evidence type="ECO:0000305" key="17">
    <source>
    </source>
</evidence>
<evidence type="ECO:0000312" key="18">
    <source>
        <dbReference type="HGNC" id="HGNC:25792"/>
    </source>
</evidence>
<evidence type="ECO:0007744" key="19">
    <source>
        <dbReference type="PDB" id="4H7W"/>
    </source>
</evidence>
<evidence type="ECO:0007744" key="20">
    <source>
        <dbReference type="PDB" id="5V1M"/>
    </source>
</evidence>
<evidence type="ECO:0007744" key="21">
    <source>
        <dbReference type="PDB" id="6D2Z"/>
    </source>
</evidence>
<evidence type="ECO:0007744" key="22">
    <source>
        <dbReference type="PDB" id="6D30"/>
    </source>
</evidence>
<evidence type="ECO:0007744" key="23">
    <source>
        <dbReference type="PDB" id="6D31"/>
    </source>
</evidence>
<evidence type="ECO:0007829" key="24">
    <source>
        <dbReference type="PDB" id="4H7W"/>
    </source>
</evidence>
<evidence type="ECO:0007829" key="25">
    <source>
        <dbReference type="PDB" id="6D30"/>
    </source>
</evidence>
<accession>Q9BQ65</accession>
<accession>B4DWE3</accession>
<accession>B4DZW5</accession>
<accession>Q96FZ9</accession>
<accession>Q9H8X8</accession>
<protein>
    <recommendedName>
        <fullName evidence="15">U6 snRNA phosphodiesterase 1</fullName>
        <shortName evidence="13">hUsb1</shortName>
    </recommendedName>
    <alternativeName>
        <fullName evidence="17">3'-5' RNA exonuclease USB1</fullName>
        <ecNumber evidence="6 7 9 10">4.6.1.-</ecNumber>
    </alternativeName>
    <alternativeName>
        <fullName evidence="14">Mutated in poikiloderma with neutropenia protein 1</fullName>
        <shortName evidence="14">Mutated in PN protein 1</shortName>
        <shortName evidence="14">hMpn1</shortName>
    </alternativeName>
</protein>
<name>USB1_HUMAN</name>
<comment type="function">
    <text evidence="5 6 7 8 9 10 11">3'-5' RNA exonuclease that trims the 3' end of oligo(U) and oligo(A) tracts of the pre-U6 small nuclear RNA (snRNA) molecule, leading to the formation of a mature U6 snRNA 3' end-terminated with a 2',3'-cyclic phosphate (PubMed:22899009, PubMed:23022480, PubMed:23190533, PubMed:26213367, PubMed:28887445, PubMed:30215753, PubMed:31832688). Participates in the U6 snRNA 3' end processing that prevents U6 snRNA degradation (PubMed:22899009, PubMed:23022480, PubMed:23190533, PubMed:26213367, PubMed:28887445, PubMed:30215753, PubMed:31832688). In addition also removes uridines from the 3' end of U6atac snRNA and possibly the vault RNA VTRNA1-1 (PubMed:26213367).</text>
</comment>
<comment type="catalytic activity">
    <reaction evidence="6 7 9 11 16">
        <text>a 3'-end uridylyl-uridine-RNA = a 3'-end 2',3'-cyclophospho-uridine-RNA + uridine</text>
        <dbReference type="Rhea" id="RHEA:46052"/>
        <dbReference type="Rhea" id="RHEA-COMP:17384"/>
        <dbReference type="Rhea" id="RHEA-COMP:17385"/>
        <dbReference type="ChEBI" id="CHEBI:16704"/>
        <dbReference type="ChEBI" id="CHEBI:85643"/>
        <dbReference type="ChEBI" id="CHEBI:85644"/>
    </reaction>
    <physiologicalReaction direction="left-to-right" evidence="16 17">
        <dbReference type="Rhea" id="RHEA:46053"/>
    </physiologicalReaction>
</comment>
<comment type="catalytic activity">
    <reaction evidence="7 10">
        <text>a 3'-end uridylyl-adenosine-RNA = a 3'-end 2',3'-cyclophospho-uridine-RNA + adenosine</text>
        <dbReference type="Rhea" id="RHEA:67896"/>
        <dbReference type="Rhea" id="RHEA-COMP:17385"/>
        <dbReference type="Rhea" id="RHEA-COMP:17386"/>
        <dbReference type="ChEBI" id="CHEBI:16335"/>
        <dbReference type="ChEBI" id="CHEBI:85644"/>
        <dbReference type="ChEBI" id="CHEBI:176518"/>
    </reaction>
    <physiologicalReaction direction="left-to-right" evidence="7">
        <dbReference type="Rhea" id="RHEA:67897"/>
    </physiologicalReaction>
</comment>
<comment type="activity regulation">
    <text evidence="7 9">3'-5' RNA exonuclease activity is inhibited by a 3' phosphate terminated RNA.</text>
</comment>
<comment type="biophysicochemical properties">
    <kinetics>
        <KM evidence="10">7.58 uM for UAUUUdUUU</KM>
        <KM evidence="10">9.75 uM for UAUUUdUAU</KM>
        <KM evidence="10">3.12 uM for UAUUUdUAU</KM>
        <KM evidence="10">7.17 uM for UAUUUdUAA</KM>
    </kinetics>
    <phDependence>
        <text evidence="9 10">Optimum pH is 7.5.</text>
    </phDependence>
</comment>
<comment type="subunit">
    <text evidence="6">Interacts with PLRG1, CDC5L and PRPF19.</text>
</comment>
<comment type="subcellular location">
    <subcellularLocation>
        <location evidence="1 5 6">Nucleus</location>
    </subcellularLocation>
</comment>
<comment type="alternative products">
    <event type="alternative splicing"/>
    <isoform>
        <id>Q9BQ65-1</id>
        <name>1</name>
        <sequence type="displayed"/>
    </isoform>
    <isoform>
        <id>Q9BQ65-2</id>
        <name>2</name>
        <sequence type="described" ref="VSP_042878"/>
    </isoform>
    <isoform>
        <id>Q9BQ65-3</id>
        <name>3</name>
        <sequence type="described" ref="VSP_042936"/>
    </isoform>
</comment>
<comment type="disease" evidence="3 4">
    <disease id="DI-02620">
        <name>Poikiloderma with neutropenia</name>
        <acronym>PN</acronym>
        <description>A genodermatosis characterized by poikiloderma, pachyonychia and chronic neutropenia. The disorder starts as a papular erythematous rash on the limbs during the first year of life. It gradually spreads centripetally and, as the papular rash resolves, hypo- and hyperpigmentation result, with development of telangiectasias. Another skin manifestation is pachyonychia, but alopecia and leukoplakia are distinctively absent. Patients have recurrent pneumonias that usually result in reactive airway disease and/or chronic cough. One of the most important extracutaneous symptoms is an increased susceptibility to infections, mainly affecting the respiratory system, primarily due to a chronic neutropenia and to neutrophil functional defects. Bone marrow abnormalities account for neutropenia and may evolve into myelodysplasia associated with the risk of leukemic transformation. Poikiloderma with neutropenia shows phenotypic overlap with Rothmund-Thomson syndrome.</description>
        <dbReference type="MIM" id="604173"/>
    </disease>
    <text>The disease is caused by variants affecting the gene represented in this entry.</text>
</comment>
<comment type="similarity">
    <text evidence="1">Belongs to the 2H phosphoesterase superfamily. USB1 family.</text>
</comment>
<reference key="1">
    <citation type="journal article" date="2004" name="Nat. Genet.">
        <title>Complete sequencing and characterization of 21,243 full-length human cDNAs.</title>
        <authorList>
            <person name="Ota T."/>
            <person name="Suzuki Y."/>
            <person name="Nishikawa T."/>
            <person name="Otsuki T."/>
            <person name="Sugiyama T."/>
            <person name="Irie R."/>
            <person name="Wakamatsu A."/>
            <person name="Hayashi K."/>
            <person name="Sato H."/>
            <person name="Nagai K."/>
            <person name="Kimura K."/>
            <person name="Makita H."/>
            <person name="Sekine M."/>
            <person name="Obayashi M."/>
            <person name="Nishi T."/>
            <person name="Shibahara T."/>
            <person name="Tanaka T."/>
            <person name="Ishii S."/>
            <person name="Yamamoto J."/>
            <person name="Saito K."/>
            <person name="Kawai Y."/>
            <person name="Isono Y."/>
            <person name="Nakamura Y."/>
            <person name="Nagahari K."/>
            <person name="Murakami K."/>
            <person name="Yasuda T."/>
            <person name="Iwayanagi T."/>
            <person name="Wagatsuma M."/>
            <person name="Shiratori A."/>
            <person name="Sudo H."/>
            <person name="Hosoiri T."/>
            <person name="Kaku Y."/>
            <person name="Kodaira H."/>
            <person name="Kondo H."/>
            <person name="Sugawara M."/>
            <person name="Takahashi M."/>
            <person name="Kanda K."/>
            <person name="Yokoi T."/>
            <person name="Furuya T."/>
            <person name="Kikkawa E."/>
            <person name="Omura Y."/>
            <person name="Abe K."/>
            <person name="Kamihara K."/>
            <person name="Katsuta N."/>
            <person name="Sato K."/>
            <person name="Tanikawa M."/>
            <person name="Yamazaki M."/>
            <person name="Ninomiya K."/>
            <person name="Ishibashi T."/>
            <person name="Yamashita H."/>
            <person name="Murakawa K."/>
            <person name="Fujimori K."/>
            <person name="Tanai H."/>
            <person name="Kimata M."/>
            <person name="Watanabe M."/>
            <person name="Hiraoka S."/>
            <person name="Chiba Y."/>
            <person name="Ishida S."/>
            <person name="Ono Y."/>
            <person name="Takiguchi S."/>
            <person name="Watanabe S."/>
            <person name="Yosida M."/>
            <person name="Hotuta T."/>
            <person name="Kusano J."/>
            <person name="Kanehori K."/>
            <person name="Takahashi-Fujii A."/>
            <person name="Hara H."/>
            <person name="Tanase T.-O."/>
            <person name="Nomura Y."/>
            <person name="Togiya S."/>
            <person name="Komai F."/>
            <person name="Hara R."/>
            <person name="Takeuchi K."/>
            <person name="Arita M."/>
            <person name="Imose N."/>
            <person name="Musashino K."/>
            <person name="Yuuki H."/>
            <person name="Oshima A."/>
            <person name="Sasaki N."/>
            <person name="Aotsuka S."/>
            <person name="Yoshikawa Y."/>
            <person name="Matsunawa H."/>
            <person name="Ichihara T."/>
            <person name="Shiohata N."/>
            <person name="Sano S."/>
            <person name="Moriya S."/>
            <person name="Momiyama H."/>
            <person name="Satoh N."/>
            <person name="Takami S."/>
            <person name="Terashima Y."/>
            <person name="Suzuki O."/>
            <person name="Nakagawa S."/>
            <person name="Senoh A."/>
            <person name="Mizoguchi H."/>
            <person name="Goto Y."/>
            <person name="Shimizu F."/>
            <person name="Wakebe H."/>
            <person name="Hishigaki H."/>
            <person name="Watanabe T."/>
            <person name="Sugiyama A."/>
            <person name="Takemoto M."/>
            <person name="Kawakami B."/>
            <person name="Yamazaki M."/>
            <person name="Watanabe K."/>
            <person name="Kumagai A."/>
            <person name="Itakura S."/>
            <person name="Fukuzumi Y."/>
            <person name="Fujimori Y."/>
            <person name="Komiyama M."/>
            <person name="Tashiro H."/>
            <person name="Tanigami A."/>
            <person name="Fujiwara T."/>
            <person name="Ono T."/>
            <person name="Yamada K."/>
            <person name="Fujii Y."/>
            <person name="Ozaki K."/>
            <person name="Hirao M."/>
            <person name="Ohmori Y."/>
            <person name="Kawabata A."/>
            <person name="Hikiji T."/>
            <person name="Kobatake N."/>
            <person name="Inagaki H."/>
            <person name="Ikema Y."/>
            <person name="Okamoto S."/>
            <person name="Okitani R."/>
            <person name="Kawakami T."/>
            <person name="Noguchi S."/>
            <person name="Itoh T."/>
            <person name="Shigeta K."/>
            <person name="Senba T."/>
            <person name="Matsumura K."/>
            <person name="Nakajima Y."/>
            <person name="Mizuno T."/>
            <person name="Morinaga M."/>
            <person name="Sasaki M."/>
            <person name="Togashi T."/>
            <person name="Oyama M."/>
            <person name="Hata H."/>
            <person name="Watanabe M."/>
            <person name="Komatsu T."/>
            <person name="Mizushima-Sugano J."/>
            <person name="Satoh T."/>
            <person name="Shirai Y."/>
            <person name="Takahashi Y."/>
            <person name="Nakagawa K."/>
            <person name="Okumura K."/>
            <person name="Nagase T."/>
            <person name="Nomura N."/>
            <person name="Kikuchi H."/>
            <person name="Masuho Y."/>
            <person name="Yamashita R."/>
            <person name="Nakai K."/>
            <person name="Yada T."/>
            <person name="Nakamura Y."/>
            <person name="Ohara O."/>
            <person name="Isogai T."/>
            <person name="Sugano S."/>
        </authorList>
    </citation>
    <scope>NUCLEOTIDE SEQUENCE [LARGE SCALE MRNA] (ISOFORMS 1; 2 AND 3)</scope>
    <source>
        <tissue>Synovium</tissue>
        <tissue>Thymus</tissue>
    </source>
</reference>
<reference key="2">
    <citation type="journal article" date="2004" name="Nature">
        <title>The sequence and analysis of duplication-rich human chromosome 16.</title>
        <authorList>
            <person name="Martin J."/>
            <person name="Han C."/>
            <person name="Gordon L.A."/>
            <person name="Terry A."/>
            <person name="Prabhakar S."/>
            <person name="She X."/>
            <person name="Xie G."/>
            <person name="Hellsten U."/>
            <person name="Chan Y.M."/>
            <person name="Altherr M."/>
            <person name="Couronne O."/>
            <person name="Aerts A."/>
            <person name="Bajorek E."/>
            <person name="Black S."/>
            <person name="Blumer H."/>
            <person name="Branscomb E."/>
            <person name="Brown N.C."/>
            <person name="Bruno W.J."/>
            <person name="Buckingham J.M."/>
            <person name="Callen D.F."/>
            <person name="Campbell C.S."/>
            <person name="Campbell M.L."/>
            <person name="Campbell E.W."/>
            <person name="Caoile C."/>
            <person name="Challacombe J.F."/>
            <person name="Chasteen L.A."/>
            <person name="Chertkov O."/>
            <person name="Chi H.C."/>
            <person name="Christensen M."/>
            <person name="Clark L.M."/>
            <person name="Cohn J.D."/>
            <person name="Denys M."/>
            <person name="Detter J.C."/>
            <person name="Dickson M."/>
            <person name="Dimitrijevic-Bussod M."/>
            <person name="Escobar J."/>
            <person name="Fawcett J.J."/>
            <person name="Flowers D."/>
            <person name="Fotopulos D."/>
            <person name="Glavina T."/>
            <person name="Gomez M."/>
            <person name="Gonzales E."/>
            <person name="Goodstein D."/>
            <person name="Goodwin L.A."/>
            <person name="Grady D.L."/>
            <person name="Grigoriev I."/>
            <person name="Groza M."/>
            <person name="Hammon N."/>
            <person name="Hawkins T."/>
            <person name="Haydu L."/>
            <person name="Hildebrand C.E."/>
            <person name="Huang W."/>
            <person name="Israni S."/>
            <person name="Jett J."/>
            <person name="Jewett P.B."/>
            <person name="Kadner K."/>
            <person name="Kimball H."/>
            <person name="Kobayashi A."/>
            <person name="Krawczyk M.-C."/>
            <person name="Leyba T."/>
            <person name="Longmire J.L."/>
            <person name="Lopez F."/>
            <person name="Lou Y."/>
            <person name="Lowry S."/>
            <person name="Ludeman T."/>
            <person name="Manohar C.F."/>
            <person name="Mark G.A."/>
            <person name="McMurray K.L."/>
            <person name="Meincke L.J."/>
            <person name="Morgan J."/>
            <person name="Moyzis R.K."/>
            <person name="Mundt M.O."/>
            <person name="Munk A.C."/>
            <person name="Nandkeshwar R.D."/>
            <person name="Pitluck S."/>
            <person name="Pollard M."/>
            <person name="Predki P."/>
            <person name="Parson-Quintana B."/>
            <person name="Ramirez L."/>
            <person name="Rash S."/>
            <person name="Retterer J."/>
            <person name="Ricke D.O."/>
            <person name="Robinson D.L."/>
            <person name="Rodriguez A."/>
            <person name="Salamov A."/>
            <person name="Saunders E.H."/>
            <person name="Scott D."/>
            <person name="Shough T."/>
            <person name="Stallings R.L."/>
            <person name="Stalvey M."/>
            <person name="Sutherland R.D."/>
            <person name="Tapia R."/>
            <person name="Tesmer J.G."/>
            <person name="Thayer N."/>
            <person name="Thompson L.S."/>
            <person name="Tice H."/>
            <person name="Torney D.C."/>
            <person name="Tran-Gyamfi M."/>
            <person name="Tsai M."/>
            <person name="Ulanovsky L.E."/>
            <person name="Ustaszewska A."/>
            <person name="Vo N."/>
            <person name="White P.S."/>
            <person name="Williams A.L."/>
            <person name="Wills P.L."/>
            <person name="Wu J.-R."/>
            <person name="Wu K."/>
            <person name="Yang J."/>
            <person name="DeJong P."/>
            <person name="Bruce D."/>
            <person name="Doggett N.A."/>
            <person name="Deaven L."/>
            <person name="Schmutz J."/>
            <person name="Grimwood J."/>
            <person name="Richardson P."/>
            <person name="Rokhsar D.S."/>
            <person name="Eichler E.E."/>
            <person name="Gilna P."/>
            <person name="Lucas S.M."/>
            <person name="Myers R.M."/>
            <person name="Rubin E.M."/>
            <person name="Pennacchio L.A."/>
        </authorList>
    </citation>
    <scope>NUCLEOTIDE SEQUENCE [LARGE SCALE GENOMIC DNA]</scope>
</reference>
<reference key="3">
    <citation type="journal article" date="2004" name="Genome Res.">
        <title>The status, quality, and expansion of the NIH full-length cDNA project: the Mammalian Gene Collection (MGC).</title>
        <authorList>
            <consortium name="The MGC Project Team"/>
        </authorList>
    </citation>
    <scope>NUCLEOTIDE SEQUENCE [LARGE SCALE MRNA] (ISOFORM 1)</scope>
    <source>
        <tissue>Kidney</tissue>
        <tissue>Pancreas</tissue>
        <tissue>Placenta</tissue>
        <tissue>Skin</tissue>
        <tissue>Uterus</tissue>
    </source>
</reference>
<reference key="4">
    <citation type="journal article" date="2010" name="Am. J. Hum. Genet.">
        <title>Targeted next-generation sequencing appoints c16orf57 as clericuzio-type poikiloderma with neutropenia gene.</title>
        <authorList>
            <person name="Volpi L."/>
            <person name="Roversi G."/>
            <person name="Colombo E.A."/>
            <person name="Leijsten N."/>
            <person name="Concolino D."/>
            <person name="Calabria A."/>
            <person name="Mencarelli M.A."/>
            <person name="Fimiani M."/>
            <person name="Macciardi F."/>
            <person name="Pfundt R."/>
            <person name="Schoenmakers E.F."/>
            <person name="Larizza L."/>
        </authorList>
    </citation>
    <scope>INVOLVEMENT IN PN</scope>
</reference>
<reference key="5">
    <citation type="journal article" date="2010" name="Am. J. Med. Genet. A">
        <title>Identification of a homozygous deletion mutation in C16orf57 in a family with Clericuzio-type poikiloderma with neutropenia.</title>
        <authorList>
            <person name="Tanaka A."/>
            <person name="Morice-Picard F."/>
            <person name="Lacombe D."/>
            <person name="Nagy N."/>
            <person name="Hide M."/>
            <person name="Taieb A."/>
            <person name="McGrath J."/>
        </authorList>
    </citation>
    <scope>INVOLVEMENT IN PN</scope>
</reference>
<reference key="6">
    <citation type="journal article" date="2012" name="Cell Rep.">
        <title>Mpn1, mutated in poikiloderma with neutropenia protein 1, is a conserved 3'-to-5' RNA exonuclease processing U6 small nuclear RNA.</title>
        <authorList>
            <person name="Shchepachev V."/>
            <person name="Wischnewski H."/>
            <person name="Missiaglia E."/>
            <person name="Soneson C."/>
            <person name="Azzalin C.M."/>
        </authorList>
    </citation>
    <scope>FUNCTION</scope>
    <scope>CATALYTIC ACTIVITY</scope>
    <scope>SUBCELLULAR LOCATION</scope>
    <scope>INTERACTION WITH PLRG1; CDC5L AND PRPF19</scope>
    <scope>MUTAGENESIS OF HIS-120 AND HIS-208</scope>
</reference>
<reference key="7">
    <citation type="journal article" date="2012" name="Genes Dev.">
        <title>C16orf57, a gene mutated in poikiloderma with neutropenia, encodes a putative phosphodiesterase responsible for the U6 snRNA 3' end modification.</title>
        <authorList>
            <person name="Mroczek S."/>
            <person name="Krwawicz J."/>
            <person name="Kutner J."/>
            <person name="Lazniewski M."/>
            <person name="Kucinski I."/>
            <person name="Ginalski K."/>
            <person name="Dziembowski A."/>
        </authorList>
    </citation>
    <scope>SUBCELLULAR LOCATION</scope>
    <scope>FUNCTION</scope>
    <scope>MUTAGENESIS OF HIS-208</scope>
    <scope>CATALYTIC ACTIVITY</scope>
</reference>
<reference key="8">
    <citation type="journal article" date="2015" name="FEBS Lett.">
        <title>Human Mpn1 promotes post-transcriptional processing and stability of U6atac.</title>
        <authorList>
            <person name="Shchepachev V."/>
            <person name="Wischnewski H."/>
            <person name="Soneson C."/>
            <person name="Arnold A.W."/>
            <person name="Azzalin C.M."/>
        </authorList>
    </citation>
    <scope>FUNCTION</scope>
    <scope>CATALYTIC ACTIVITY</scope>
    <scope>MUTAGENESIS OF HIS-120 AND HIS-208</scope>
</reference>
<reference key="9">
    <citation type="journal article" date="2020" name="Nucleic Acids Res.">
        <title>Structural basis for the evolution of cyclic phosphodiesterase activity in the U6 snRNA exoribonuclease Usb1.</title>
        <authorList>
            <person name="Nomura Y."/>
            <person name="Montemayor E.J."/>
            <person name="Virta J.M."/>
            <person name="Hayes S.M."/>
            <person name="Butcher S.E."/>
        </authorList>
    </citation>
    <scope>FUNCTION</scope>
    <scope>CATALYTIC ACTIVITY</scope>
</reference>
<reference evidence="19" key="10">
    <citation type="journal article" date="2013" name="Blood">
        <title>Aberrant 3' oligoadenylation of spliceosomal U6 small nuclear RNA in poikiloderma with neutropenia.</title>
        <authorList>
            <person name="Hilcenko C."/>
            <person name="Simpson P.J."/>
            <person name="Finch A.J."/>
            <person name="Bowler F.R."/>
            <person name="Churcher M.J."/>
            <person name="Jin L."/>
            <person name="Packman L.C."/>
            <person name="Shlien A."/>
            <person name="Campbell P."/>
            <person name="Kirwan M."/>
            <person name="Dokal I."/>
            <person name="Warren A.J."/>
        </authorList>
    </citation>
    <scope>X-RAY CRYSTALLOGRAPHY (1.1 ANGSTROMS) OF 73-265</scope>
    <scope>CATALYTIC ACTIVITY</scope>
    <scope>FUNCTION</scope>
    <scope>ACTIVE SITE</scope>
    <scope>MUTAGENESIS OF HIS-120 AND HIS-208</scope>
    <scope>ACTIVITY REGULATION</scope>
</reference>
<reference evidence="20" key="11">
    <citation type="journal article" date="2017" name="Nat. Commun.">
        <title>Usb1 controls U6 snRNP assembly through evolutionarily divergent cyclic phosphodiesterase activities.</title>
        <authorList>
            <person name="Didychuk A.L."/>
            <person name="Montemayor E.J."/>
            <person name="Carrocci T.J."/>
            <person name="DeLaitsch A.T."/>
            <person name="Lucarelli S.E."/>
            <person name="Westler W.M."/>
            <person name="Brow D.A."/>
            <person name="Hoskins A.A."/>
            <person name="Butcher S.E."/>
        </authorList>
    </citation>
    <scope>X-RAY CRYSTALLOGRAPHY (1.47 ANGSTROMS) OF 79-265 IN COMPLEX WITH UMP</scope>
    <scope>FUNCTION</scope>
    <scope>CATALYTIC ACTIVITY</scope>
    <scope>BIOPHYSICOCHEMICAL PROPERTIES</scope>
    <scope>REGION</scope>
    <scope>ACTIVITY REGULATION</scope>
</reference>
<reference evidence="21 22 23" key="12">
    <citation type="journal article" date="2018" name="Nucleic Acids Res.">
        <title>Structural and mechanistic basis for preferential deadenylation of U6 snRNA by Usb1.</title>
        <authorList>
            <person name="Nomura Y."/>
            <person name="Roston D."/>
            <person name="Montemayor E.J."/>
            <person name="Cui Q."/>
            <person name="Butcher S.E."/>
        </authorList>
    </citation>
    <scope>X-RAY CRYSTALLOGRAPHY (1.17 ANGSTROMS) OF 79-265 OF MUTANT HIS-208 IN COMPLEX WITH AMP; 3'-TERMINAL PUPU RESIDUE AND 3'-TERMINAL PUPA RESIDUE</scope>
    <scope>MUTAGENESIS OF HIS-120; SER-122; TYR-202; HIS-208 AND SER-210</scope>
    <scope>FUNCTION</scope>
    <scope>CATALYTIC ACTIVITY</scope>
    <scope>BIOPHYSICOCHEMICAL PROPERTIES</scope>
    <scope>REGION</scope>
    <scope>ACTIVE SITE</scope>
</reference>
<organism>
    <name type="scientific">Homo sapiens</name>
    <name type="common">Human</name>
    <dbReference type="NCBI Taxonomy" id="9606"/>
    <lineage>
        <taxon>Eukaryota</taxon>
        <taxon>Metazoa</taxon>
        <taxon>Chordata</taxon>
        <taxon>Craniata</taxon>
        <taxon>Vertebrata</taxon>
        <taxon>Euteleostomi</taxon>
        <taxon>Mammalia</taxon>
        <taxon>Eutheria</taxon>
        <taxon>Euarchontoglires</taxon>
        <taxon>Primates</taxon>
        <taxon>Haplorrhini</taxon>
        <taxon>Catarrhini</taxon>
        <taxon>Hominidae</taxon>
        <taxon>Homo</taxon>
    </lineage>
</organism>
<dbReference type="EC" id="4.6.1.-" evidence="6 7 9 10"/>
<dbReference type="EMBL" id="AK023216">
    <property type="protein sequence ID" value="BAB14469.1"/>
    <property type="molecule type" value="mRNA"/>
</dbReference>
<dbReference type="EMBL" id="AK301494">
    <property type="protein sequence ID" value="BAG63005.1"/>
    <property type="molecule type" value="mRNA"/>
</dbReference>
<dbReference type="EMBL" id="AK303121">
    <property type="protein sequence ID" value="BAG64227.1"/>
    <property type="molecule type" value="mRNA"/>
</dbReference>
<dbReference type="EMBL" id="AC010543">
    <property type="status" value="NOT_ANNOTATED_CDS"/>
    <property type="molecule type" value="Genomic_DNA"/>
</dbReference>
<dbReference type="EMBL" id="AC012182">
    <property type="status" value="NOT_ANNOTATED_CDS"/>
    <property type="molecule type" value="Genomic_DNA"/>
</dbReference>
<dbReference type="EMBL" id="BC004415">
    <property type="protein sequence ID" value="AAH04415.1"/>
    <property type="molecule type" value="mRNA"/>
</dbReference>
<dbReference type="EMBL" id="BC006291">
    <property type="protein sequence ID" value="AAH06291.1"/>
    <property type="molecule type" value="mRNA"/>
</dbReference>
<dbReference type="EMBL" id="BC007774">
    <property type="protein sequence ID" value="AAH07774.1"/>
    <property type="molecule type" value="mRNA"/>
</dbReference>
<dbReference type="EMBL" id="BC010099">
    <property type="protein sequence ID" value="AAH10099.1"/>
    <property type="molecule type" value="mRNA"/>
</dbReference>
<dbReference type="EMBL" id="BC021554">
    <property type="protein sequence ID" value="AAH21554.1"/>
    <property type="molecule type" value="mRNA"/>
</dbReference>
<dbReference type="CCDS" id="CCDS10791.1">
    <molecule id="Q9BQ65-1"/>
</dbReference>
<dbReference type="CCDS" id="CCDS55997.1">
    <molecule id="Q9BQ65-3"/>
</dbReference>
<dbReference type="CCDS" id="CCDS55998.1">
    <molecule id="Q9BQ65-2"/>
</dbReference>
<dbReference type="RefSeq" id="NP_001182231.1">
    <molecule id="Q9BQ65-2"/>
    <property type="nucleotide sequence ID" value="NM_001195302.2"/>
</dbReference>
<dbReference type="RefSeq" id="NP_001191840.1">
    <molecule id="Q9BQ65-3"/>
    <property type="nucleotide sequence ID" value="NM_001204911.2"/>
</dbReference>
<dbReference type="RefSeq" id="NP_001317497.1">
    <property type="nucleotide sequence ID" value="NM_001330568.1"/>
</dbReference>
<dbReference type="RefSeq" id="NP_078874.2">
    <molecule id="Q9BQ65-1"/>
    <property type="nucleotide sequence ID" value="NM_024598.3"/>
</dbReference>
<dbReference type="PDB" id="4H7W">
    <property type="method" value="X-ray"/>
    <property type="resolution" value="1.10 A"/>
    <property type="chains" value="A=73-265"/>
</dbReference>
<dbReference type="PDB" id="5V1M">
    <property type="method" value="X-ray"/>
    <property type="resolution" value="1.47 A"/>
    <property type="chains" value="A=79-265"/>
</dbReference>
<dbReference type="PDB" id="6D2Z">
    <property type="method" value="X-ray"/>
    <property type="resolution" value="1.18 A"/>
    <property type="chains" value="A=79-265"/>
</dbReference>
<dbReference type="PDB" id="6D30">
    <property type="method" value="X-ray"/>
    <property type="resolution" value="1.17 A"/>
    <property type="chains" value="A=79-265"/>
</dbReference>
<dbReference type="PDB" id="6D31">
    <property type="method" value="X-ray"/>
    <property type="resolution" value="1.20 A"/>
    <property type="chains" value="A=79-265"/>
</dbReference>
<dbReference type="PDBsum" id="4H7W"/>
<dbReference type="PDBsum" id="5V1M"/>
<dbReference type="PDBsum" id="6D2Z"/>
<dbReference type="PDBsum" id="6D30"/>
<dbReference type="PDBsum" id="6D31"/>
<dbReference type="SMR" id="Q9BQ65"/>
<dbReference type="BioGRID" id="122778">
    <property type="interactions" value="50"/>
</dbReference>
<dbReference type="FunCoup" id="Q9BQ65">
    <property type="interactions" value="1104"/>
</dbReference>
<dbReference type="IntAct" id="Q9BQ65">
    <property type="interactions" value="42"/>
</dbReference>
<dbReference type="MINT" id="Q9BQ65"/>
<dbReference type="STRING" id="9606.ENSP00000219281"/>
<dbReference type="iPTMnet" id="Q9BQ65"/>
<dbReference type="PhosphoSitePlus" id="Q9BQ65"/>
<dbReference type="BioMuta" id="USB1"/>
<dbReference type="DMDM" id="74732815"/>
<dbReference type="jPOST" id="Q9BQ65"/>
<dbReference type="MassIVE" id="Q9BQ65"/>
<dbReference type="PaxDb" id="9606-ENSP00000219281"/>
<dbReference type="PeptideAtlas" id="Q9BQ65"/>
<dbReference type="ProteomicsDB" id="78632">
    <molecule id="Q9BQ65-1"/>
</dbReference>
<dbReference type="ProteomicsDB" id="78633">
    <molecule id="Q9BQ65-2"/>
</dbReference>
<dbReference type="ProteomicsDB" id="78634">
    <molecule id="Q9BQ65-3"/>
</dbReference>
<dbReference type="Antibodypedia" id="29032">
    <property type="antibodies" value="128 antibodies from 23 providers"/>
</dbReference>
<dbReference type="DNASU" id="79650"/>
<dbReference type="Ensembl" id="ENST00000219281.8">
    <molecule id="Q9BQ65-1"/>
    <property type="protein sequence ID" value="ENSP00000219281.3"/>
    <property type="gene ID" value="ENSG00000103005.13"/>
</dbReference>
<dbReference type="Ensembl" id="ENST00000423271.8">
    <molecule id="Q9BQ65-3"/>
    <property type="protein sequence ID" value="ENSP00000409792.3"/>
    <property type="gene ID" value="ENSG00000103005.13"/>
</dbReference>
<dbReference type="Ensembl" id="ENST00000539737.6">
    <molecule id="Q9BQ65-2"/>
    <property type="protein sequence ID" value="ENSP00000446143.2"/>
    <property type="gene ID" value="ENSG00000103005.13"/>
</dbReference>
<dbReference type="GeneID" id="79650"/>
<dbReference type="KEGG" id="hsa:79650"/>
<dbReference type="MANE-Select" id="ENST00000219281.8">
    <property type="protein sequence ID" value="ENSP00000219281.3"/>
    <property type="RefSeq nucleotide sequence ID" value="NM_024598.4"/>
    <property type="RefSeq protein sequence ID" value="NP_078874.2"/>
</dbReference>
<dbReference type="UCSC" id="uc002emz.4">
    <molecule id="Q9BQ65-1"/>
    <property type="organism name" value="human"/>
</dbReference>
<dbReference type="AGR" id="HGNC:25792"/>
<dbReference type="CTD" id="79650"/>
<dbReference type="DisGeNET" id="79650"/>
<dbReference type="GeneCards" id="USB1"/>
<dbReference type="GeneReviews" id="USB1"/>
<dbReference type="HGNC" id="HGNC:25792">
    <property type="gene designation" value="USB1"/>
</dbReference>
<dbReference type="HPA" id="ENSG00000103005">
    <property type="expression patterns" value="Low tissue specificity"/>
</dbReference>
<dbReference type="MalaCards" id="USB1"/>
<dbReference type="MIM" id="604173">
    <property type="type" value="phenotype"/>
</dbReference>
<dbReference type="MIM" id="613276">
    <property type="type" value="gene"/>
</dbReference>
<dbReference type="neXtProt" id="NX_Q9BQ65"/>
<dbReference type="OpenTargets" id="ENSG00000103005"/>
<dbReference type="Orphanet" id="1775">
    <property type="disease" value="Dyskeratosis congenita"/>
</dbReference>
<dbReference type="Orphanet" id="221046">
    <property type="disease" value="Poikiloderma with neutropenia"/>
</dbReference>
<dbReference type="PharmGKB" id="PA143485394"/>
<dbReference type="VEuPathDB" id="HostDB:ENSG00000103005"/>
<dbReference type="eggNOG" id="KOG3102">
    <property type="taxonomic scope" value="Eukaryota"/>
</dbReference>
<dbReference type="GeneTree" id="ENSGT00390000004596"/>
<dbReference type="InParanoid" id="Q9BQ65"/>
<dbReference type="OMA" id="KTVVLQY"/>
<dbReference type="OrthoDB" id="49151at2759"/>
<dbReference type="PAN-GO" id="Q9BQ65">
    <property type="GO annotations" value="3 GO annotations based on evolutionary models"/>
</dbReference>
<dbReference type="PhylomeDB" id="Q9BQ65"/>
<dbReference type="TreeFam" id="TF324364"/>
<dbReference type="PathwayCommons" id="Q9BQ65"/>
<dbReference type="SignaLink" id="Q9BQ65"/>
<dbReference type="BioGRID-ORCS" id="79650">
    <property type="hits" value="69 hits in 1163 CRISPR screens"/>
</dbReference>
<dbReference type="ChiTaRS" id="USB1">
    <property type="organism name" value="human"/>
</dbReference>
<dbReference type="EvolutionaryTrace" id="Q9BQ65"/>
<dbReference type="GenomeRNAi" id="79650"/>
<dbReference type="Pharos" id="Q9BQ65">
    <property type="development level" value="Tbio"/>
</dbReference>
<dbReference type="PRO" id="PR:Q9BQ65"/>
<dbReference type="Proteomes" id="UP000005640">
    <property type="component" value="Chromosome 16"/>
</dbReference>
<dbReference type="RNAct" id="Q9BQ65">
    <property type="molecule type" value="protein"/>
</dbReference>
<dbReference type="Bgee" id="ENSG00000103005">
    <property type="expression patterns" value="Expressed in granulocyte and 180 other cell types or tissues"/>
</dbReference>
<dbReference type="ExpressionAtlas" id="Q9BQ65">
    <property type="expression patterns" value="baseline and differential"/>
</dbReference>
<dbReference type="GO" id="GO:0045171">
    <property type="term" value="C:intercellular bridge"/>
    <property type="evidence" value="ECO:0000314"/>
    <property type="project" value="HPA"/>
</dbReference>
<dbReference type="GO" id="GO:0005654">
    <property type="term" value="C:nucleoplasm"/>
    <property type="evidence" value="ECO:0000314"/>
    <property type="project" value="HPA"/>
</dbReference>
<dbReference type="GO" id="GO:0005634">
    <property type="term" value="C:nucleus"/>
    <property type="evidence" value="ECO:0000314"/>
    <property type="project" value="UniProtKB"/>
</dbReference>
<dbReference type="GO" id="GO:0000175">
    <property type="term" value="F:3'-5'-RNA exonuclease activity"/>
    <property type="evidence" value="ECO:0000314"/>
    <property type="project" value="UniProtKB"/>
</dbReference>
<dbReference type="GO" id="GO:0016829">
    <property type="term" value="F:lyase activity"/>
    <property type="evidence" value="ECO:0007669"/>
    <property type="project" value="UniProtKB-KW"/>
</dbReference>
<dbReference type="GO" id="GO:1990838">
    <property type="term" value="F:poly(U)-specific exoribonuclease activity, producing 3' uridine cyclic phosphate ends"/>
    <property type="evidence" value="ECO:0000314"/>
    <property type="project" value="UniProtKB"/>
</dbReference>
<dbReference type="GO" id="GO:0008380">
    <property type="term" value="P:RNA splicing"/>
    <property type="evidence" value="ECO:0000315"/>
    <property type="project" value="UniProtKB"/>
</dbReference>
<dbReference type="GO" id="GO:0034472">
    <property type="term" value="P:snRNA 3'-end processing"/>
    <property type="evidence" value="ECO:0000315"/>
    <property type="project" value="UniProtKB"/>
</dbReference>
<dbReference type="GO" id="GO:0034477">
    <property type="term" value="P:U6 snRNA 3'-end processing"/>
    <property type="evidence" value="ECO:0000314"/>
    <property type="project" value="UniProtKB"/>
</dbReference>
<dbReference type="FunFam" id="3.90.1140.10:FF:000006">
    <property type="entry name" value="U6 snRNA phosphodiesterase"/>
    <property type="match status" value="1"/>
</dbReference>
<dbReference type="Gene3D" id="3.90.1140.10">
    <property type="entry name" value="Cyclic phosphodiesterase"/>
    <property type="match status" value="1"/>
</dbReference>
<dbReference type="HAMAP" id="MF_03040">
    <property type="entry name" value="USB1"/>
    <property type="match status" value="1"/>
</dbReference>
<dbReference type="InterPro" id="IPR027521">
    <property type="entry name" value="Usb1"/>
</dbReference>
<dbReference type="PANTHER" id="PTHR13522">
    <property type="entry name" value="U6 SNRNA PHOSPHODIESTERASE 1"/>
    <property type="match status" value="1"/>
</dbReference>
<dbReference type="PANTHER" id="PTHR13522:SF3">
    <property type="entry name" value="U6 SNRNA PHOSPHODIESTERASE 1"/>
    <property type="match status" value="1"/>
</dbReference>
<dbReference type="Pfam" id="PF09749">
    <property type="entry name" value="HVSL"/>
    <property type="match status" value="1"/>
</dbReference>
<gene>
    <name evidence="1 18" type="primary">USB1</name>
    <name type="synonym">C16orf57</name>
    <name evidence="14" type="synonym">Mpn1</name>
</gene>
<feature type="chain" id="PRO_0000274391" description="U6 snRNA phosphodiesterase 1">
    <location>
        <begin position="1"/>
        <end position="265"/>
    </location>
</feature>
<feature type="region of interest" description="Disordered" evidence="2">
    <location>
        <begin position="1"/>
        <end position="72"/>
    </location>
</feature>
<feature type="compositionally biased region" description="Basic and acidic residues" evidence="2">
    <location>
        <begin position="20"/>
        <end position="31"/>
    </location>
</feature>
<feature type="active site" description="Proton acceptor" evidence="1 7 10">
    <location>
        <position position="120"/>
    </location>
</feature>
<feature type="active site" description="Proton donor" evidence="1 7 10">
    <location>
        <position position="208"/>
    </location>
</feature>
<feature type="binding site" evidence="10 23">
    <location>
        <begin position="120"/>
        <end position="122"/>
    </location>
    <ligand>
        <name>AMP</name>
        <dbReference type="ChEBI" id="CHEBI:456215"/>
    </ligand>
</feature>
<feature type="binding site" evidence="9 20">
    <location>
        <position position="164"/>
    </location>
    <ligand>
        <name>UMP</name>
        <dbReference type="ChEBI" id="CHEBI:57865"/>
    </ligand>
</feature>
<feature type="binding site" evidence="10 23">
    <location>
        <position position="202"/>
    </location>
    <ligand>
        <name>AMP</name>
        <dbReference type="ChEBI" id="CHEBI:456215"/>
    </ligand>
</feature>
<feature type="binding site" evidence="9 20">
    <location>
        <position position="202"/>
    </location>
    <ligand>
        <name>UMP</name>
        <dbReference type="ChEBI" id="CHEBI:57865"/>
    </ligand>
</feature>
<feature type="binding site" evidence="10 23">
    <location>
        <begin position="204"/>
        <end position="210"/>
    </location>
    <ligand>
        <name>AMP</name>
        <dbReference type="ChEBI" id="CHEBI:456215"/>
    </ligand>
</feature>
<feature type="binding site" evidence="9 20">
    <location>
        <begin position="206"/>
        <end position="210"/>
    </location>
    <ligand>
        <name>UMP</name>
        <dbReference type="ChEBI" id="CHEBI:57865"/>
    </ligand>
</feature>
<feature type="splice variant" id="VSP_042936" description="In isoform 3." evidence="12">
    <original>RFFFTANQVKIYTNQEKTRTFIGLEVTSGHAQFLDLVSEVDRVMEEFNLTTFYQDPSFHLSLAWCVGDARLQLEGQCLQELQAIVDGFEDAEVLLRVHTEQVRCKSGNKFFSMPLK</original>
    <variation>SPHPGPHCLIGTKDAPVTQEIPKDLGALRQEPGSQTR</variation>
    <location>
        <begin position="150"/>
        <end position="265"/>
    </location>
</feature>
<feature type="splice variant" id="VSP_042878" description="In isoform 2." evidence="12">
    <location>
        <begin position="150"/>
        <end position="167"/>
    </location>
</feature>
<feature type="sequence variant" id="VAR_053822" description="In dbSNP:rs35025252.">
    <original>R</original>
    <variation>K</variation>
    <location>
        <position position="115"/>
    </location>
</feature>
<feature type="sequence variant" id="VAR_030277" description="In dbSNP:rs16959641.">
    <original>Q</original>
    <variation>E</variation>
    <location>
        <position position="250"/>
    </location>
</feature>
<feature type="mutagenesis site" description="Abolishes exoribonuclease activity. Does not restore U6 snRNA processing when expressed in deleted mpn1 yeast cells; when associated with A-208. Increases the accumulation of unspliced pre-mRNAs when expressed in deleted mpn1 yeast cells; when associated with A-208. Slows growth in the cold when expressed in deleted mpn1 yeast cells; when associated with A-208. Abolishes exoribonuclease activity; when associated with A-208. Decreases U6 and U6atac motility." evidence="6 7 8">
    <original>H</original>
    <variation>A</variation>
    <location>
        <position position="120"/>
    </location>
</feature>
<feature type="mutagenesis site" description="Significantly decreases exonuclease activity." evidence="10">
    <original>H</original>
    <variation>N</variation>
    <location>
        <position position="120"/>
    </location>
</feature>
<feature type="mutagenesis site" description="Significantly decreases exonuclease activity." evidence="10">
    <original>S</original>
    <variation>C</variation>
    <location>
        <position position="122"/>
    </location>
</feature>
<feature type="mutagenesis site" description="Significantly decreases exonuclease activity." evidence="10">
    <original>Y</original>
    <variation>A</variation>
    <location>
        <position position="202"/>
    </location>
</feature>
<feature type="mutagenesis site" description="Abolishes exoribonuclease activity. Does not rescue the molecular phenotype caused by USB1 depletion. Does not restore U6 snRNA processing when expressed in deleted mpn1 yeast cells; when associated with A-120. Increases the accumulation of unspliced pre-mRNAs when expressed in deleted mpn1 yeast cells; when associated with A-120. Slows growth in the cold when expressed in deleted mpn1 yeast cells; when associated with A-120. Abolishes exoribonuclease activity; when associated with A-120. Decreases U6 and U6atac motility." evidence="5 6 7 8">
    <original>H</original>
    <variation>A</variation>
    <location>
        <position position="208"/>
    </location>
</feature>
<feature type="mutagenesis site" description="Loss of exonuclease activity." evidence="10">
    <original>H</original>
    <variation>N</variation>
    <location>
        <position position="208"/>
    </location>
</feature>
<feature type="mutagenesis site" description="Loss of exonuclease activity." evidence="10">
    <original>H</original>
    <variation>Q</variation>
    <location>
        <position position="208"/>
    </location>
</feature>
<feature type="mutagenesis site" description="Significantly decreases exonuclease activity." evidence="10">
    <original>S</original>
    <variation>C</variation>
    <location>
        <position position="210"/>
    </location>
</feature>
<feature type="sequence conflict" description="In Ref. 3; AAH10099." evidence="15" ref="3">
    <original>Y</original>
    <variation>C</variation>
    <location>
        <position position="89"/>
    </location>
</feature>
<feature type="sequence conflict" description="In Ref. 1; BAB14469." evidence="15" ref="1">
    <original>L</original>
    <variation>P</variation>
    <location>
        <position position="209"/>
    </location>
</feature>
<feature type="strand" evidence="24">
    <location>
        <begin position="80"/>
        <end position="89"/>
    </location>
</feature>
<feature type="helix" evidence="24">
    <location>
        <begin position="93"/>
        <end position="107"/>
    </location>
</feature>
<feature type="strand" evidence="24">
    <location>
        <begin position="117"/>
        <end position="122"/>
    </location>
</feature>
<feature type="strand" evidence="24">
    <location>
        <begin position="127"/>
        <end position="130"/>
    </location>
</feature>
<feature type="helix" evidence="24">
    <location>
        <begin position="131"/>
        <end position="133"/>
    </location>
</feature>
<feature type="helix" evidence="24">
    <location>
        <begin position="134"/>
        <end position="145"/>
    </location>
</feature>
<feature type="strand" evidence="24">
    <location>
        <begin position="155"/>
        <end position="162"/>
    </location>
</feature>
<feature type="strand" evidence="24">
    <location>
        <begin position="166"/>
        <end position="175"/>
    </location>
</feature>
<feature type="helix" evidence="24">
    <location>
        <begin position="179"/>
        <end position="195"/>
    </location>
</feature>
<feature type="strand" evidence="24">
    <location>
        <begin position="208"/>
        <end position="216"/>
    </location>
</feature>
<feature type="helix" evidence="24">
    <location>
        <begin position="219"/>
        <end position="222"/>
    </location>
</feature>
<feature type="helix" evidence="24">
    <location>
        <begin position="225"/>
        <end position="235"/>
    </location>
</feature>
<feature type="helix" evidence="24">
    <location>
        <begin position="241"/>
        <end position="244"/>
    </location>
</feature>
<feature type="strand" evidence="25">
    <location>
        <begin position="245"/>
        <end position="247"/>
    </location>
</feature>
<feature type="strand" evidence="24">
    <location>
        <begin position="250"/>
        <end position="255"/>
    </location>
</feature>
<feature type="strand" evidence="24">
    <location>
        <begin position="258"/>
        <end position="263"/>
    </location>
</feature>
<proteinExistence type="evidence at protein level"/>